<proteinExistence type="inferred from homology"/>
<feature type="chain" id="PRO_0000315589" description="Uncharacterized Nudix hydrolase NudL">
    <location>
        <begin position="1"/>
        <end position="199"/>
    </location>
</feature>
<feature type="domain" description="Nudix hydrolase" evidence="1">
    <location>
        <begin position="38"/>
        <end position="169"/>
    </location>
</feature>
<feature type="short sequence motif" description="Nudix box">
    <location>
        <begin position="76"/>
        <end position="98"/>
    </location>
</feature>
<feature type="binding site" evidence="1">
    <location>
        <position position="92"/>
    </location>
    <ligand>
        <name>Mg(2+)</name>
        <dbReference type="ChEBI" id="CHEBI:18420"/>
    </ligand>
</feature>
<feature type="binding site" evidence="1">
    <location>
        <position position="96"/>
    </location>
    <ligand>
        <name>Mg(2+)</name>
        <dbReference type="ChEBI" id="CHEBI:18420"/>
    </ligand>
</feature>
<dbReference type="EC" id="3.6.1.-" evidence="1"/>
<dbReference type="EMBL" id="AL590842">
    <property type="protein sequence ID" value="CAL20413.1"/>
    <property type="molecule type" value="Genomic_DNA"/>
</dbReference>
<dbReference type="EMBL" id="AE009952">
    <property type="protein sequence ID" value="AAM86092.1"/>
    <property type="molecule type" value="Genomic_DNA"/>
</dbReference>
<dbReference type="EMBL" id="AE017042">
    <property type="protein sequence ID" value="AAS61854.1"/>
    <property type="molecule type" value="Genomic_DNA"/>
</dbReference>
<dbReference type="PIR" id="AB0216">
    <property type="entry name" value="AB0216"/>
</dbReference>
<dbReference type="RefSeq" id="WP_002211080.1">
    <property type="nucleotide sequence ID" value="NZ_WUCM01000019.1"/>
</dbReference>
<dbReference type="RefSeq" id="YP_002346769.1">
    <property type="nucleotide sequence ID" value="NC_003143.1"/>
</dbReference>
<dbReference type="SMR" id="Q7CHW2"/>
<dbReference type="STRING" id="214092.YPO1772"/>
<dbReference type="PaxDb" id="214092-YPO1772"/>
<dbReference type="EnsemblBacteria" id="AAS61854">
    <property type="protein sequence ID" value="AAS61854"/>
    <property type="gene ID" value="YP_1621"/>
</dbReference>
<dbReference type="KEGG" id="ype:YPO1772"/>
<dbReference type="KEGG" id="ypk:y2536"/>
<dbReference type="KEGG" id="ypm:YP_1621"/>
<dbReference type="PATRIC" id="fig|214092.21.peg.2130"/>
<dbReference type="eggNOG" id="COG0494">
    <property type="taxonomic scope" value="Bacteria"/>
</dbReference>
<dbReference type="HOGENOM" id="CLU_040940_5_2_6"/>
<dbReference type="OMA" id="YYIWGAT"/>
<dbReference type="OrthoDB" id="9802805at2"/>
<dbReference type="Proteomes" id="UP000000815">
    <property type="component" value="Chromosome"/>
</dbReference>
<dbReference type="Proteomes" id="UP000001019">
    <property type="component" value="Chromosome"/>
</dbReference>
<dbReference type="Proteomes" id="UP000002490">
    <property type="component" value="Chromosome"/>
</dbReference>
<dbReference type="GO" id="GO:0010945">
    <property type="term" value="F:coenzyme A diphosphatase activity"/>
    <property type="evidence" value="ECO:0007669"/>
    <property type="project" value="InterPro"/>
</dbReference>
<dbReference type="GO" id="GO:0000287">
    <property type="term" value="F:magnesium ion binding"/>
    <property type="evidence" value="ECO:0007669"/>
    <property type="project" value="UniProtKB-UniRule"/>
</dbReference>
<dbReference type="GO" id="GO:0030145">
    <property type="term" value="F:manganese ion binding"/>
    <property type="evidence" value="ECO:0007669"/>
    <property type="project" value="UniProtKB-UniRule"/>
</dbReference>
<dbReference type="GO" id="GO:0009132">
    <property type="term" value="P:nucleoside diphosphate metabolic process"/>
    <property type="evidence" value="ECO:0007669"/>
    <property type="project" value="InterPro"/>
</dbReference>
<dbReference type="CDD" id="cd03426">
    <property type="entry name" value="NUDIX_CoAse_Nudt7"/>
    <property type="match status" value="1"/>
</dbReference>
<dbReference type="Gene3D" id="3.90.79.10">
    <property type="entry name" value="Nucleoside Triphosphate Pyrophosphohydrolase"/>
    <property type="match status" value="1"/>
</dbReference>
<dbReference type="HAMAP" id="MF_01592">
    <property type="entry name" value="Nudix_NudL"/>
    <property type="match status" value="1"/>
</dbReference>
<dbReference type="InterPro" id="IPR045121">
    <property type="entry name" value="CoAse"/>
</dbReference>
<dbReference type="InterPro" id="IPR015797">
    <property type="entry name" value="NUDIX_hydrolase-like_dom_sf"/>
</dbReference>
<dbReference type="InterPro" id="IPR000086">
    <property type="entry name" value="NUDIX_hydrolase_dom"/>
</dbReference>
<dbReference type="InterPro" id="IPR000059">
    <property type="entry name" value="NUDIX_hydrolase_NudL_CS"/>
</dbReference>
<dbReference type="InterPro" id="IPR023735">
    <property type="entry name" value="Nudix_NudL"/>
</dbReference>
<dbReference type="NCBIfam" id="NF007980">
    <property type="entry name" value="PRK10707.1"/>
    <property type="match status" value="1"/>
</dbReference>
<dbReference type="PANTHER" id="PTHR12992:SF11">
    <property type="entry name" value="MITOCHONDRIAL COENZYME A DIPHOSPHATASE NUDT8"/>
    <property type="match status" value="1"/>
</dbReference>
<dbReference type="PANTHER" id="PTHR12992">
    <property type="entry name" value="NUDIX HYDROLASE"/>
    <property type="match status" value="1"/>
</dbReference>
<dbReference type="Pfam" id="PF00293">
    <property type="entry name" value="NUDIX"/>
    <property type="match status" value="1"/>
</dbReference>
<dbReference type="SUPFAM" id="SSF55811">
    <property type="entry name" value="Nudix"/>
    <property type="match status" value="1"/>
</dbReference>
<dbReference type="PROSITE" id="PS51462">
    <property type="entry name" value="NUDIX"/>
    <property type="match status" value="1"/>
</dbReference>
<dbReference type="PROSITE" id="PS01293">
    <property type="entry name" value="NUDIX_COA"/>
    <property type="match status" value="1"/>
</dbReference>
<evidence type="ECO:0000255" key="1">
    <source>
        <dbReference type="HAMAP-Rule" id="MF_01592"/>
    </source>
</evidence>
<comment type="function">
    <text evidence="1">Probably mediates the hydrolysis of some nucleoside diphosphate derivatives.</text>
</comment>
<comment type="cofactor">
    <cofactor evidence="1">
        <name>Mn(2+)</name>
        <dbReference type="ChEBI" id="CHEBI:29035"/>
    </cofactor>
    <cofactor evidence="1">
        <name>Mg(2+)</name>
        <dbReference type="ChEBI" id="CHEBI:18420"/>
    </cofactor>
</comment>
<comment type="similarity">
    <text evidence="1">Belongs to the Nudix hydrolase family. PCD1 subfamily.</text>
</comment>
<accession>Q7CHW2</accession>
<accession>Q74US8</accession>
<organism>
    <name type="scientific">Yersinia pestis</name>
    <dbReference type="NCBI Taxonomy" id="632"/>
    <lineage>
        <taxon>Bacteria</taxon>
        <taxon>Pseudomonadati</taxon>
        <taxon>Pseudomonadota</taxon>
        <taxon>Gammaproteobacteria</taxon>
        <taxon>Enterobacterales</taxon>
        <taxon>Yersiniaceae</taxon>
        <taxon>Yersinia</taxon>
    </lineage>
</organism>
<gene>
    <name evidence="1" type="primary">nudL</name>
    <name type="ordered locus">YPO1772</name>
    <name type="ordered locus">y2536</name>
    <name type="ordered locus">YP_1621</name>
</gene>
<protein>
    <recommendedName>
        <fullName evidence="1">Uncharacterized Nudix hydrolase NudL</fullName>
        <ecNumber evidence="1">3.6.1.-</ecNumber>
    </recommendedName>
</protein>
<reference key="1">
    <citation type="journal article" date="2001" name="Nature">
        <title>Genome sequence of Yersinia pestis, the causative agent of plague.</title>
        <authorList>
            <person name="Parkhill J."/>
            <person name="Wren B.W."/>
            <person name="Thomson N.R."/>
            <person name="Titball R.W."/>
            <person name="Holden M.T.G."/>
            <person name="Prentice M.B."/>
            <person name="Sebaihia M."/>
            <person name="James K.D."/>
            <person name="Churcher C.M."/>
            <person name="Mungall K.L."/>
            <person name="Baker S."/>
            <person name="Basham D."/>
            <person name="Bentley S.D."/>
            <person name="Brooks K."/>
            <person name="Cerdeno-Tarraga A.-M."/>
            <person name="Chillingworth T."/>
            <person name="Cronin A."/>
            <person name="Davies R.M."/>
            <person name="Davis P."/>
            <person name="Dougan G."/>
            <person name="Feltwell T."/>
            <person name="Hamlin N."/>
            <person name="Holroyd S."/>
            <person name="Jagels K."/>
            <person name="Karlyshev A.V."/>
            <person name="Leather S."/>
            <person name="Moule S."/>
            <person name="Oyston P.C.F."/>
            <person name="Quail M.A."/>
            <person name="Rutherford K.M."/>
            <person name="Simmonds M."/>
            <person name="Skelton J."/>
            <person name="Stevens K."/>
            <person name="Whitehead S."/>
            <person name="Barrell B.G."/>
        </authorList>
    </citation>
    <scope>NUCLEOTIDE SEQUENCE [LARGE SCALE GENOMIC DNA]</scope>
    <source>
        <strain>CO-92 / Biovar Orientalis</strain>
    </source>
</reference>
<reference key="2">
    <citation type="journal article" date="2002" name="J. Bacteriol.">
        <title>Genome sequence of Yersinia pestis KIM.</title>
        <authorList>
            <person name="Deng W."/>
            <person name="Burland V."/>
            <person name="Plunkett G. III"/>
            <person name="Boutin A."/>
            <person name="Mayhew G.F."/>
            <person name="Liss P."/>
            <person name="Perna N.T."/>
            <person name="Rose D.J."/>
            <person name="Mau B."/>
            <person name="Zhou S."/>
            <person name="Schwartz D.C."/>
            <person name="Fetherston J.D."/>
            <person name="Lindler L.E."/>
            <person name="Brubaker R.R."/>
            <person name="Plano G.V."/>
            <person name="Straley S.C."/>
            <person name="McDonough K.A."/>
            <person name="Nilles M.L."/>
            <person name="Matson J.S."/>
            <person name="Blattner F.R."/>
            <person name="Perry R.D."/>
        </authorList>
    </citation>
    <scope>NUCLEOTIDE SEQUENCE [LARGE SCALE GENOMIC DNA]</scope>
    <source>
        <strain>KIM10+ / Biovar Mediaevalis</strain>
    </source>
</reference>
<reference key="3">
    <citation type="journal article" date="2004" name="DNA Res.">
        <title>Complete genome sequence of Yersinia pestis strain 91001, an isolate avirulent to humans.</title>
        <authorList>
            <person name="Song Y."/>
            <person name="Tong Z."/>
            <person name="Wang J."/>
            <person name="Wang L."/>
            <person name="Guo Z."/>
            <person name="Han Y."/>
            <person name="Zhang J."/>
            <person name="Pei D."/>
            <person name="Zhou D."/>
            <person name="Qin H."/>
            <person name="Pang X."/>
            <person name="Han Y."/>
            <person name="Zhai J."/>
            <person name="Li M."/>
            <person name="Cui B."/>
            <person name="Qi Z."/>
            <person name="Jin L."/>
            <person name="Dai R."/>
            <person name="Chen F."/>
            <person name="Li S."/>
            <person name="Ye C."/>
            <person name="Du Z."/>
            <person name="Lin W."/>
            <person name="Wang J."/>
            <person name="Yu J."/>
            <person name="Yang H."/>
            <person name="Wang J."/>
            <person name="Huang P."/>
            <person name="Yang R."/>
        </authorList>
    </citation>
    <scope>NUCLEOTIDE SEQUENCE [LARGE SCALE GENOMIC DNA]</scope>
    <source>
        <strain>91001 / Biovar Mediaevalis</strain>
    </source>
</reference>
<keyword id="KW-0378">Hydrolase</keyword>
<keyword id="KW-0460">Magnesium</keyword>
<keyword id="KW-0464">Manganese</keyword>
<keyword id="KW-0479">Metal-binding</keyword>
<keyword id="KW-1185">Reference proteome</keyword>
<name>NUDL_YERPE</name>
<sequence length="199" mass="22244">MSELITGQYLSEFINRFQLQLPQPDNVLTHSHYFSATNRRAAVLIPIICRPEPTLLLTRRADHLRKHAGQVAFPGGKADPDDQSLISTALREAEEEVAIPASVVHVLGKLAPLNSSSGYHVTPIVGLVPANIPFYGNDEEVAGLFEIPLHEALSLSRYHSLDIHREGINHRVYLSWYENQFIWGLTATIIRHLAQQVSI</sequence>